<dbReference type="EC" id="2.5.1.55" evidence="1"/>
<dbReference type="EMBL" id="CP001001">
    <property type="protein sequence ID" value="ACB22990.1"/>
    <property type="molecule type" value="Genomic_DNA"/>
</dbReference>
<dbReference type="RefSeq" id="WP_012317983.1">
    <property type="nucleotide sequence ID" value="NC_010505.1"/>
</dbReference>
<dbReference type="SMR" id="B1LZU2"/>
<dbReference type="STRING" id="426355.Mrad2831_0980"/>
<dbReference type="GeneID" id="6136997"/>
<dbReference type="KEGG" id="mrd:Mrad2831_0980"/>
<dbReference type="PATRIC" id="fig|426355.14.peg.1021"/>
<dbReference type="eggNOG" id="COG2877">
    <property type="taxonomic scope" value="Bacteria"/>
</dbReference>
<dbReference type="HOGENOM" id="CLU_036666_0_0_5"/>
<dbReference type="OrthoDB" id="9776934at2"/>
<dbReference type="UniPathway" id="UPA00030"/>
<dbReference type="UniPathway" id="UPA00357">
    <property type="reaction ID" value="UER00474"/>
</dbReference>
<dbReference type="Proteomes" id="UP000006589">
    <property type="component" value="Chromosome"/>
</dbReference>
<dbReference type="GO" id="GO:0005737">
    <property type="term" value="C:cytoplasm"/>
    <property type="evidence" value="ECO:0007669"/>
    <property type="project" value="UniProtKB-SubCell"/>
</dbReference>
<dbReference type="GO" id="GO:0008676">
    <property type="term" value="F:3-deoxy-8-phosphooctulonate synthase activity"/>
    <property type="evidence" value="ECO:0007669"/>
    <property type="project" value="UniProtKB-UniRule"/>
</dbReference>
<dbReference type="GO" id="GO:0019294">
    <property type="term" value="P:keto-3-deoxy-D-manno-octulosonic acid biosynthetic process"/>
    <property type="evidence" value="ECO:0007669"/>
    <property type="project" value="UniProtKB-UniRule"/>
</dbReference>
<dbReference type="Gene3D" id="3.20.20.70">
    <property type="entry name" value="Aldolase class I"/>
    <property type="match status" value="1"/>
</dbReference>
<dbReference type="HAMAP" id="MF_00056">
    <property type="entry name" value="KDO8P_synth"/>
    <property type="match status" value="1"/>
</dbReference>
<dbReference type="InterPro" id="IPR013785">
    <property type="entry name" value="Aldolase_TIM"/>
</dbReference>
<dbReference type="InterPro" id="IPR006218">
    <property type="entry name" value="DAHP1/KDSA"/>
</dbReference>
<dbReference type="InterPro" id="IPR006269">
    <property type="entry name" value="KDO8P_synthase"/>
</dbReference>
<dbReference type="NCBIfam" id="TIGR01362">
    <property type="entry name" value="KDO8P_synth"/>
    <property type="match status" value="1"/>
</dbReference>
<dbReference type="NCBIfam" id="NF003543">
    <property type="entry name" value="PRK05198.1"/>
    <property type="match status" value="1"/>
</dbReference>
<dbReference type="PANTHER" id="PTHR21057">
    <property type="entry name" value="PHOSPHO-2-DEHYDRO-3-DEOXYHEPTONATE ALDOLASE"/>
    <property type="match status" value="1"/>
</dbReference>
<dbReference type="Pfam" id="PF00793">
    <property type="entry name" value="DAHP_synth_1"/>
    <property type="match status" value="1"/>
</dbReference>
<dbReference type="SUPFAM" id="SSF51569">
    <property type="entry name" value="Aldolase"/>
    <property type="match status" value="1"/>
</dbReference>
<comment type="catalytic activity">
    <reaction evidence="1">
        <text>D-arabinose 5-phosphate + phosphoenolpyruvate + H2O = 3-deoxy-alpha-D-manno-2-octulosonate-8-phosphate + phosphate</text>
        <dbReference type="Rhea" id="RHEA:14053"/>
        <dbReference type="ChEBI" id="CHEBI:15377"/>
        <dbReference type="ChEBI" id="CHEBI:43474"/>
        <dbReference type="ChEBI" id="CHEBI:57693"/>
        <dbReference type="ChEBI" id="CHEBI:58702"/>
        <dbReference type="ChEBI" id="CHEBI:85985"/>
        <dbReference type="EC" id="2.5.1.55"/>
    </reaction>
</comment>
<comment type="pathway">
    <text evidence="1">Carbohydrate biosynthesis; 3-deoxy-D-manno-octulosonate biosynthesis; 3-deoxy-D-manno-octulosonate from D-ribulose 5-phosphate: step 2/3.</text>
</comment>
<comment type="pathway">
    <text evidence="1">Bacterial outer membrane biogenesis; lipopolysaccharide biosynthesis.</text>
</comment>
<comment type="subcellular location">
    <subcellularLocation>
        <location evidence="1">Cytoplasm</location>
    </subcellularLocation>
</comment>
<comment type="similarity">
    <text evidence="1">Belongs to the KdsA family.</text>
</comment>
<organism>
    <name type="scientific">Methylobacterium radiotolerans (strain ATCC 27329 / DSM 1819 / JCM 2831 / NBRC 15690 / NCIMB 10815 / 0-1)</name>
    <dbReference type="NCBI Taxonomy" id="426355"/>
    <lineage>
        <taxon>Bacteria</taxon>
        <taxon>Pseudomonadati</taxon>
        <taxon>Pseudomonadota</taxon>
        <taxon>Alphaproteobacteria</taxon>
        <taxon>Hyphomicrobiales</taxon>
        <taxon>Methylobacteriaceae</taxon>
        <taxon>Methylobacterium</taxon>
    </lineage>
</organism>
<evidence type="ECO:0000255" key="1">
    <source>
        <dbReference type="HAMAP-Rule" id="MF_00056"/>
    </source>
</evidence>
<accession>B1LZU2</accession>
<proteinExistence type="inferred from homology"/>
<name>KDSA_METRJ</name>
<reference key="1">
    <citation type="submission" date="2008-03" db="EMBL/GenBank/DDBJ databases">
        <title>Complete sequence of chromosome of Methylobacterium radiotolerans JCM 2831.</title>
        <authorList>
            <consortium name="US DOE Joint Genome Institute"/>
            <person name="Copeland A."/>
            <person name="Lucas S."/>
            <person name="Lapidus A."/>
            <person name="Glavina del Rio T."/>
            <person name="Dalin E."/>
            <person name="Tice H."/>
            <person name="Bruce D."/>
            <person name="Goodwin L."/>
            <person name="Pitluck S."/>
            <person name="Kiss H."/>
            <person name="Brettin T."/>
            <person name="Detter J.C."/>
            <person name="Han C."/>
            <person name="Kuske C.R."/>
            <person name="Schmutz J."/>
            <person name="Larimer F."/>
            <person name="Land M."/>
            <person name="Hauser L."/>
            <person name="Kyrpides N."/>
            <person name="Mikhailova N."/>
            <person name="Marx C.J."/>
            <person name="Richardson P."/>
        </authorList>
    </citation>
    <scope>NUCLEOTIDE SEQUENCE [LARGE SCALE GENOMIC DNA]</scope>
    <source>
        <strain>ATCC 27329 / DSM 1819 / JCM 2831 / NBRC 15690 / NCIMB 10815 / 0-1</strain>
    </source>
</reference>
<keyword id="KW-0963">Cytoplasm</keyword>
<keyword id="KW-0448">Lipopolysaccharide biosynthesis</keyword>
<keyword id="KW-0808">Transferase</keyword>
<sequence>MSKIETSGPVVQVGDARFANHLPLTLIAGPCQLEGRQHALEIAAALKEMAAGLGVGLVFKTSFDKANRTSGSAARGIGLDGALPVFAEIRETLGLPVLTDVHAAEQCARAAEAVDVLQIPAFLCRQTDLLLAAAATGRAVNIKKGQFLAPWDMKHVAAKVTEAGNPNVIVTERGASFGYNTLVSDMRSLPIMAQVTQGAPVVFDATHSVQQPGGQGASSGGQREFVAVLARAAVAVGVAGVFIETHPDPDRAPSDGPNMVALRDMPALLEELLAFDRLAKRRTA</sequence>
<feature type="chain" id="PRO_1000091823" description="2-dehydro-3-deoxyphosphooctonate aldolase">
    <location>
        <begin position="1"/>
        <end position="284"/>
    </location>
</feature>
<gene>
    <name evidence="1" type="primary">kdsA</name>
    <name type="ordered locus">Mrad2831_0980</name>
</gene>
<protein>
    <recommendedName>
        <fullName evidence="1">2-dehydro-3-deoxyphosphooctonate aldolase</fullName>
        <ecNumber evidence="1">2.5.1.55</ecNumber>
    </recommendedName>
    <alternativeName>
        <fullName evidence="1">3-deoxy-D-manno-octulosonic acid 8-phosphate synthase</fullName>
    </alternativeName>
    <alternativeName>
        <fullName evidence="1">KDO-8-phosphate synthase</fullName>
        <shortName evidence="1">KDO 8-P synthase</shortName>
        <shortName evidence="1">KDOPS</shortName>
    </alternativeName>
    <alternativeName>
        <fullName evidence="1">Phospho-2-dehydro-3-deoxyoctonate aldolase</fullName>
    </alternativeName>
</protein>